<accession>Q5REU2</accession>
<organism>
    <name type="scientific">Pongo abelii</name>
    <name type="common">Sumatran orangutan</name>
    <name type="synonym">Pongo pygmaeus abelii</name>
    <dbReference type="NCBI Taxonomy" id="9601"/>
    <lineage>
        <taxon>Eukaryota</taxon>
        <taxon>Metazoa</taxon>
        <taxon>Chordata</taxon>
        <taxon>Craniata</taxon>
        <taxon>Vertebrata</taxon>
        <taxon>Euteleostomi</taxon>
        <taxon>Mammalia</taxon>
        <taxon>Eutheria</taxon>
        <taxon>Euarchontoglires</taxon>
        <taxon>Primates</taxon>
        <taxon>Haplorrhini</taxon>
        <taxon>Catarrhini</taxon>
        <taxon>Hominidae</taxon>
        <taxon>Pongo</taxon>
    </lineage>
</organism>
<proteinExistence type="evidence at transcript level"/>
<comment type="function">
    <text evidence="1">Component of the large ribosomal subunit. The ribosome is a large ribonucleoprotein complex responsible for the synthesis of proteins in the cell.</text>
</comment>
<comment type="subunit">
    <text evidence="1">Component of the large ribosomal subunit.</text>
</comment>
<comment type="subcellular location">
    <subcellularLocation>
        <location evidence="1">Cytoplasm</location>
    </subcellularLocation>
</comment>
<comment type="similarity">
    <text evidence="2">Belongs to the universal ribosomal protein uL14 family.</text>
</comment>
<evidence type="ECO:0000250" key="1">
    <source>
        <dbReference type="UniProtKB" id="P62829"/>
    </source>
</evidence>
<evidence type="ECO:0000305" key="2"/>
<feature type="chain" id="PRO_0000128615" description="Large ribosomal subunit protein uL14">
    <location>
        <begin position="1"/>
        <end position="140"/>
    </location>
</feature>
<feature type="modified residue" description="Phosphoserine" evidence="1">
    <location>
        <position position="17"/>
    </location>
</feature>
<feature type="modified residue" description="Phosphotyrosine" evidence="1">
    <location>
        <position position="38"/>
    </location>
</feature>
<reference key="1">
    <citation type="submission" date="2004-11" db="EMBL/GenBank/DDBJ databases">
        <authorList>
            <consortium name="The German cDNA consortium"/>
        </authorList>
    </citation>
    <scope>NUCLEOTIDE SEQUENCE [LARGE SCALE MRNA]</scope>
    <source>
        <tissue>Kidney</tissue>
    </source>
</reference>
<protein>
    <recommendedName>
        <fullName evidence="2">Large ribosomal subunit protein uL14</fullName>
    </recommendedName>
    <alternativeName>
        <fullName>60S ribosomal protein L23</fullName>
    </alternativeName>
</protein>
<gene>
    <name type="primary">RPL23</name>
</gene>
<name>RL23_PONAB</name>
<dbReference type="EMBL" id="CR857424">
    <property type="protein sequence ID" value="CAH89715.1"/>
    <property type="molecule type" value="mRNA"/>
</dbReference>
<dbReference type="RefSeq" id="NP_001124779.1">
    <property type="nucleotide sequence ID" value="NM_001131307.1"/>
</dbReference>
<dbReference type="SMR" id="Q5REU2"/>
<dbReference type="STRING" id="9601.ENSPPYP00000009553"/>
<dbReference type="GeneID" id="100171632"/>
<dbReference type="KEGG" id="pon:100171632"/>
<dbReference type="CTD" id="9349"/>
<dbReference type="eggNOG" id="KOG0901">
    <property type="taxonomic scope" value="Eukaryota"/>
</dbReference>
<dbReference type="InParanoid" id="Q5REU2"/>
<dbReference type="OrthoDB" id="407959at2759"/>
<dbReference type="Proteomes" id="UP000001595">
    <property type="component" value="Unplaced"/>
</dbReference>
<dbReference type="GO" id="GO:0022625">
    <property type="term" value="C:cytosolic large ribosomal subunit"/>
    <property type="evidence" value="ECO:0007669"/>
    <property type="project" value="TreeGrafter"/>
</dbReference>
<dbReference type="GO" id="GO:0070180">
    <property type="term" value="F:large ribosomal subunit rRNA binding"/>
    <property type="evidence" value="ECO:0007669"/>
    <property type="project" value="TreeGrafter"/>
</dbReference>
<dbReference type="GO" id="GO:0003735">
    <property type="term" value="F:structural constituent of ribosome"/>
    <property type="evidence" value="ECO:0007669"/>
    <property type="project" value="InterPro"/>
</dbReference>
<dbReference type="GO" id="GO:0006412">
    <property type="term" value="P:translation"/>
    <property type="evidence" value="ECO:0007669"/>
    <property type="project" value="InterPro"/>
</dbReference>
<dbReference type="CDD" id="cd00337">
    <property type="entry name" value="Ribosomal_uL14"/>
    <property type="match status" value="1"/>
</dbReference>
<dbReference type="FunFam" id="2.40.150.20:FF:000003">
    <property type="entry name" value="60S ribosomal protein L23"/>
    <property type="match status" value="1"/>
</dbReference>
<dbReference type="Gene3D" id="2.40.150.20">
    <property type="entry name" value="Ribosomal protein L14"/>
    <property type="match status" value="1"/>
</dbReference>
<dbReference type="HAMAP" id="MF_01367">
    <property type="entry name" value="Ribosomal_uL14"/>
    <property type="match status" value="1"/>
</dbReference>
<dbReference type="InterPro" id="IPR000218">
    <property type="entry name" value="Ribosomal_uL14"/>
</dbReference>
<dbReference type="InterPro" id="IPR019972">
    <property type="entry name" value="Ribosomal_uL14_CS"/>
</dbReference>
<dbReference type="InterPro" id="IPR036853">
    <property type="entry name" value="Ribosomal_uL14_sf"/>
</dbReference>
<dbReference type="NCBIfam" id="NF006344">
    <property type="entry name" value="PRK08571.1"/>
    <property type="match status" value="1"/>
</dbReference>
<dbReference type="PANTHER" id="PTHR11761">
    <property type="entry name" value="50S/60S RIBOSOMAL PROTEIN L14/L23"/>
    <property type="match status" value="1"/>
</dbReference>
<dbReference type="PANTHER" id="PTHR11761:SF8">
    <property type="entry name" value="LARGE RIBOSOMAL SUBUNIT PROTEIN UL14"/>
    <property type="match status" value="1"/>
</dbReference>
<dbReference type="Pfam" id="PF00238">
    <property type="entry name" value="Ribosomal_L14"/>
    <property type="match status" value="1"/>
</dbReference>
<dbReference type="SMART" id="SM01374">
    <property type="entry name" value="Ribosomal_L14"/>
    <property type="match status" value="1"/>
</dbReference>
<dbReference type="SUPFAM" id="SSF50193">
    <property type="entry name" value="Ribosomal protein L14"/>
    <property type="match status" value="1"/>
</dbReference>
<dbReference type="PROSITE" id="PS00049">
    <property type="entry name" value="RIBOSOMAL_L14"/>
    <property type="match status" value="1"/>
</dbReference>
<sequence length="140" mass="14837">MSKRGRGGSSGAKFRISLGLPVGAVINCADNTGAKNLYIISVKGIKGQLNRLPAAGVGDMVMATVKKGKPELRKKVHPAVVIRQRKSYRRKDGVFLYFEDNAGVIVNNKGEMKGSAITGPVAKECADLWPRIASNAGSIA</sequence>
<keyword id="KW-0963">Cytoplasm</keyword>
<keyword id="KW-0597">Phosphoprotein</keyword>
<keyword id="KW-1185">Reference proteome</keyword>
<keyword id="KW-0687">Ribonucleoprotein</keyword>
<keyword id="KW-0689">Ribosomal protein</keyword>